<sequence>MAGRAILIAGPTASGKSALALGLAQARGGVVINADSMQVYGDLRVLTARPSPEEEEAAPHRLYGHVDGAVNYSVGHYLADAGRVLRDAWAAERLPIVVGGTGLYFKALLEGLSAIPPVPEAVRAAVRAQAEGRETASLHADLARLDPEGAARIAPGDRLRVLRALEIRAATGRPLSAFQGSRQPGPLAGVACEKLFLAPDRAGLRARIDARFLSMMEAGALDEVRRLRARHLDPMLPVMRAHGVPGLIAHLNGALTREEAVARGQADTRRYAKRQVTWFRHQVGEDWRWLTPEEAAREFLPGH</sequence>
<dbReference type="EC" id="2.5.1.75" evidence="1"/>
<dbReference type="EMBL" id="CP001349">
    <property type="protein sequence ID" value="ACL61469.1"/>
    <property type="molecule type" value="Genomic_DNA"/>
</dbReference>
<dbReference type="SMR" id="B8IEX6"/>
<dbReference type="STRING" id="460265.Mnod_6708"/>
<dbReference type="KEGG" id="mno:Mnod_6708"/>
<dbReference type="eggNOG" id="COG0324">
    <property type="taxonomic scope" value="Bacteria"/>
</dbReference>
<dbReference type="HOGENOM" id="CLU_032616_0_1_5"/>
<dbReference type="Proteomes" id="UP000008207">
    <property type="component" value="Chromosome"/>
</dbReference>
<dbReference type="GO" id="GO:0005524">
    <property type="term" value="F:ATP binding"/>
    <property type="evidence" value="ECO:0007669"/>
    <property type="project" value="UniProtKB-UniRule"/>
</dbReference>
<dbReference type="GO" id="GO:0052381">
    <property type="term" value="F:tRNA dimethylallyltransferase activity"/>
    <property type="evidence" value="ECO:0007669"/>
    <property type="project" value="UniProtKB-UniRule"/>
</dbReference>
<dbReference type="GO" id="GO:0006400">
    <property type="term" value="P:tRNA modification"/>
    <property type="evidence" value="ECO:0007669"/>
    <property type="project" value="TreeGrafter"/>
</dbReference>
<dbReference type="Gene3D" id="1.10.20.140">
    <property type="match status" value="1"/>
</dbReference>
<dbReference type="Gene3D" id="3.40.50.300">
    <property type="entry name" value="P-loop containing nucleotide triphosphate hydrolases"/>
    <property type="match status" value="1"/>
</dbReference>
<dbReference type="HAMAP" id="MF_00185">
    <property type="entry name" value="IPP_trans"/>
    <property type="match status" value="1"/>
</dbReference>
<dbReference type="InterPro" id="IPR039657">
    <property type="entry name" value="Dimethylallyltransferase"/>
</dbReference>
<dbReference type="InterPro" id="IPR018022">
    <property type="entry name" value="IPT"/>
</dbReference>
<dbReference type="InterPro" id="IPR027417">
    <property type="entry name" value="P-loop_NTPase"/>
</dbReference>
<dbReference type="NCBIfam" id="TIGR00174">
    <property type="entry name" value="miaA"/>
    <property type="match status" value="1"/>
</dbReference>
<dbReference type="PANTHER" id="PTHR11088">
    <property type="entry name" value="TRNA DIMETHYLALLYLTRANSFERASE"/>
    <property type="match status" value="1"/>
</dbReference>
<dbReference type="PANTHER" id="PTHR11088:SF60">
    <property type="entry name" value="TRNA DIMETHYLALLYLTRANSFERASE"/>
    <property type="match status" value="1"/>
</dbReference>
<dbReference type="Pfam" id="PF01715">
    <property type="entry name" value="IPPT"/>
    <property type="match status" value="1"/>
</dbReference>
<dbReference type="SUPFAM" id="SSF52540">
    <property type="entry name" value="P-loop containing nucleoside triphosphate hydrolases"/>
    <property type="match status" value="2"/>
</dbReference>
<reference key="1">
    <citation type="submission" date="2009-01" db="EMBL/GenBank/DDBJ databases">
        <title>Complete sequence of chromosome of Methylobacterium nodulans ORS 2060.</title>
        <authorList>
            <consortium name="US DOE Joint Genome Institute"/>
            <person name="Lucas S."/>
            <person name="Copeland A."/>
            <person name="Lapidus A."/>
            <person name="Glavina del Rio T."/>
            <person name="Dalin E."/>
            <person name="Tice H."/>
            <person name="Bruce D."/>
            <person name="Goodwin L."/>
            <person name="Pitluck S."/>
            <person name="Sims D."/>
            <person name="Brettin T."/>
            <person name="Detter J.C."/>
            <person name="Han C."/>
            <person name="Larimer F."/>
            <person name="Land M."/>
            <person name="Hauser L."/>
            <person name="Kyrpides N."/>
            <person name="Ivanova N."/>
            <person name="Marx C.J."/>
            <person name="Richardson P."/>
        </authorList>
    </citation>
    <scope>NUCLEOTIDE SEQUENCE [LARGE SCALE GENOMIC DNA]</scope>
    <source>
        <strain>LMG 21967 / CNCM I-2342 / ORS 2060</strain>
    </source>
</reference>
<name>MIAA_METNO</name>
<keyword id="KW-0067">ATP-binding</keyword>
<keyword id="KW-0460">Magnesium</keyword>
<keyword id="KW-0547">Nucleotide-binding</keyword>
<keyword id="KW-1185">Reference proteome</keyword>
<keyword id="KW-0808">Transferase</keyword>
<keyword id="KW-0819">tRNA processing</keyword>
<gene>
    <name evidence="1" type="primary">miaA</name>
    <name type="ordered locus">Mnod_6708</name>
</gene>
<proteinExistence type="inferred from homology"/>
<accession>B8IEX6</accession>
<organism>
    <name type="scientific">Methylobacterium nodulans (strain LMG 21967 / CNCM I-2342 / ORS 2060)</name>
    <dbReference type="NCBI Taxonomy" id="460265"/>
    <lineage>
        <taxon>Bacteria</taxon>
        <taxon>Pseudomonadati</taxon>
        <taxon>Pseudomonadota</taxon>
        <taxon>Alphaproteobacteria</taxon>
        <taxon>Hyphomicrobiales</taxon>
        <taxon>Methylobacteriaceae</taxon>
        <taxon>Methylobacterium</taxon>
    </lineage>
</organism>
<protein>
    <recommendedName>
        <fullName evidence="1">tRNA dimethylallyltransferase</fullName>
        <ecNumber evidence="1">2.5.1.75</ecNumber>
    </recommendedName>
    <alternativeName>
        <fullName evidence="1">Dimethylallyl diphosphate:tRNA dimethylallyltransferase</fullName>
        <shortName evidence="1">DMAPP:tRNA dimethylallyltransferase</shortName>
        <shortName evidence="1">DMATase</shortName>
    </alternativeName>
    <alternativeName>
        <fullName evidence="1">Isopentenyl-diphosphate:tRNA isopentenyltransferase</fullName>
        <shortName evidence="1">IPP transferase</shortName>
        <shortName evidence="1">IPPT</shortName>
        <shortName evidence="1">IPTase</shortName>
    </alternativeName>
</protein>
<feature type="chain" id="PRO_0000377220" description="tRNA dimethylallyltransferase">
    <location>
        <begin position="1"/>
        <end position="303"/>
    </location>
</feature>
<feature type="region of interest" description="Interaction with substrate tRNA" evidence="1">
    <location>
        <begin position="35"/>
        <end position="38"/>
    </location>
</feature>
<feature type="binding site" evidence="1">
    <location>
        <begin position="10"/>
        <end position="17"/>
    </location>
    <ligand>
        <name>ATP</name>
        <dbReference type="ChEBI" id="CHEBI:30616"/>
    </ligand>
</feature>
<feature type="binding site" evidence="1">
    <location>
        <begin position="12"/>
        <end position="17"/>
    </location>
    <ligand>
        <name>substrate</name>
    </ligand>
</feature>
<feature type="site" description="Interaction with substrate tRNA" evidence="1">
    <location>
        <position position="101"/>
    </location>
</feature>
<feature type="site" description="Interaction with substrate tRNA" evidence="1">
    <location>
        <position position="123"/>
    </location>
</feature>
<evidence type="ECO:0000255" key="1">
    <source>
        <dbReference type="HAMAP-Rule" id="MF_00185"/>
    </source>
</evidence>
<comment type="function">
    <text evidence="1">Catalyzes the transfer of a dimethylallyl group onto the adenine at position 37 in tRNAs that read codons beginning with uridine, leading to the formation of N6-(dimethylallyl)adenosine (i(6)A).</text>
</comment>
<comment type="catalytic activity">
    <reaction evidence="1">
        <text>adenosine(37) in tRNA + dimethylallyl diphosphate = N(6)-dimethylallyladenosine(37) in tRNA + diphosphate</text>
        <dbReference type="Rhea" id="RHEA:26482"/>
        <dbReference type="Rhea" id="RHEA-COMP:10162"/>
        <dbReference type="Rhea" id="RHEA-COMP:10375"/>
        <dbReference type="ChEBI" id="CHEBI:33019"/>
        <dbReference type="ChEBI" id="CHEBI:57623"/>
        <dbReference type="ChEBI" id="CHEBI:74411"/>
        <dbReference type="ChEBI" id="CHEBI:74415"/>
        <dbReference type="EC" id="2.5.1.75"/>
    </reaction>
</comment>
<comment type="cofactor">
    <cofactor evidence="1">
        <name>Mg(2+)</name>
        <dbReference type="ChEBI" id="CHEBI:18420"/>
    </cofactor>
</comment>
<comment type="subunit">
    <text evidence="1">Monomer.</text>
</comment>
<comment type="similarity">
    <text evidence="1">Belongs to the IPP transferase family.</text>
</comment>